<dbReference type="EC" id="3.4.24.-" evidence="1"/>
<dbReference type="EMBL" id="AB024399">
    <property type="protein sequence ID" value="BAA88165.1"/>
    <property type="molecule type" value="Genomic_DNA"/>
</dbReference>
<dbReference type="EMBL" id="AB002583">
    <property type="protein sequence ID" value="BAC76202.1"/>
    <property type="molecule type" value="Genomic_DNA"/>
</dbReference>
<dbReference type="RefSeq" id="NP_849040.1">
    <property type="nucleotide sequence ID" value="NC_004799.1"/>
</dbReference>
<dbReference type="SMR" id="Q9TJ83"/>
<dbReference type="STRING" id="280699.Q9TJ83"/>
<dbReference type="MEROPS" id="M41.017"/>
<dbReference type="EnsemblPlants" id="CMV129CT">
    <property type="protein sequence ID" value="CMV129CT"/>
    <property type="gene ID" value="CMV129C"/>
</dbReference>
<dbReference type="GeneID" id="844888"/>
<dbReference type="Gramene" id="CMV129CT">
    <property type="protein sequence ID" value="CMV129CT"/>
    <property type="gene ID" value="CMV129C"/>
</dbReference>
<dbReference type="KEGG" id="cme:CymeCp108"/>
<dbReference type="eggNOG" id="KOG0731">
    <property type="taxonomic scope" value="Eukaryota"/>
</dbReference>
<dbReference type="HOGENOM" id="CLU_000688_16_2_1"/>
<dbReference type="Proteomes" id="UP000007014">
    <property type="component" value="Chloroplast"/>
</dbReference>
<dbReference type="GO" id="GO:0009535">
    <property type="term" value="C:chloroplast thylakoid membrane"/>
    <property type="evidence" value="ECO:0007669"/>
    <property type="project" value="UniProtKB-SubCell"/>
</dbReference>
<dbReference type="GO" id="GO:0005524">
    <property type="term" value="F:ATP binding"/>
    <property type="evidence" value="ECO:0007669"/>
    <property type="project" value="UniProtKB-UniRule"/>
</dbReference>
<dbReference type="GO" id="GO:0016887">
    <property type="term" value="F:ATP hydrolysis activity"/>
    <property type="evidence" value="ECO:0007669"/>
    <property type="project" value="UniProtKB-UniRule"/>
</dbReference>
<dbReference type="GO" id="GO:0004176">
    <property type="term" value="F:ATP-dependent peptidase activity"/>
    <property type="evidence" value="ECO:0007669"/>
    <property type="project" value="InterPro"/>
</dbReference>
<dbReference type="GO" id="GO:0004222">
    <property type="term" value="F:metalloendopeptidase activity"/>
    <property type="evidence" value="ECO:0007669"/>
    <property type="project" value="InterPro"/>
</dbReference>
<dbReference type="GO" id="GO:0008270">
    <property type="term" value="F:zinc ion binding"/>
    <property type="evidence" value="ECO:0007669"/>
    <property type="project" value="UniProtKB-UniRule"/>
</dbReference>
<dbReference type="GO" id="GO:0030163">
    <property type="term" value="P:protein catabolic process"/>
    <property type="evidence" value="ECO:0007669"/>
    <property type="project" value="UniProtKB-UniRule"/>
</dbReference>
<dbReference type="GO" id="GO:0006508">
    <property type="term" value="P:proteolysis"/>
    <property type="evidence" value="ECO:0007669"/>
    <property type="project" value="UniProtKB-KW"/>
</dbReference>
<dbReference type="CDD" id="cd19501">
    <property type="entry name" value="RecA-like_FtsH"/>
    <property type="match status" value="1"/>
</dbReference>
<dbReference type="FunFam" id="1.10.8.60:FF:000001">
    <property type="entry name" value="ATP-dependent zinc metalloprotease FtsH"/>
    <property type="match status" value="1"/>
</dbReference>
<dbReference type="FunFam" id="1.20.58.760:FF:000001">
    <property type="entry name" value="ATP-dependent zinc metalloprotease FtsH"/>
    <property type="match status" value="1"/>
</dbReference>
<dbReference type="FunFam" id="3.40.50.300:FF:000001">
    <property type="entry name" value="ATP-dependent zinc metalloprotease FtsH"/>
    <property type="match status" value="1"/>
</dbReference>
<dbReference type="Gene3D" id="1.10.8.60">
    <property type="match status" value="1"/>
</dbReference>
<dbReference type="Gene3D" id="3.40.50.300">
    <property type="entry name" value="P-loop containing nucleotide triphosphate hydrolases"/>
    <property type="match status" value="1"/>
</dbReference>
<dbReference type="Gene3D" id="1.20.58.760">
    <property type="entry name" value="Peptidase M41"/>
    <property type="match status" value="1"/>
</dbReference>
<dbReference type="HAMAP" id="MF_01458">
    <property type="entry name" value="FtsH"/>
    <property type="match status" value="1"/>
</dbReference>
<dbReference type="InterPro" id="IPR003593">
    <property type="entry name" value="AAA+_ATPase"/>
</dbReference>
<dbReference type="InterPro" id="IPR041569">
    <property type="entry name" value="AAA_lid_3"/>
</dbReference>
<dbReference type="InterPro" id="IPR003959">
    <property type="entry name" value="ATPase_AAA_core"/>
</dbReference>
<dbReference type="InterPro" id="IPR003960">
    <property type="entry name" value="ATPase_AAA_CS"/>
</dbReference>
<dbReference type="InterPro" id="IPR005936">
    <property type="entry name" value="FtsH"/>
</dbReference>
<dbReference type="InterPro" id="IPR027417">
    <property type="entry name" value="P-loop_NTPase"/>
</dbReference>
<dbReference type="InterPro" id="IPR011546">
    <property type="entry name" value="Pept_M41_FtsH_extracell"/>
</dbReference>
<dbReference type="InterPro" id="IPR000642">
    <property type="entry name" value="Peptidase_M41"/>
</dbReference>
<dbReference type="InterPro" id="IPR037219">
    <property type="entry name" value="Peptidase_M41-like"/>
</dbReference>
<dbReference type="NCBIfam" id="TIGR01241">
    <property type="entry name" value="FtsH_fam"/>
    <property type="match status" value="1"/>
</dbReference>
<dbReference type="PANTHER" id="PTHR23076:SF139">
    <property type="entry name" value="ATP-DEPENDENT ZINC METALLOPROTEASE FTSH 2, CHLOROPLASTIC"/>
    <property type="match status" value="1"/>
</dbReference>
<dbReference type="PANTHER" id="PTHR23076">
    <property type="entry name" value="METALLOPROTEASE M41 FTSH"/>
    <property type="match status" value="1"/>
</dbReference>
<dbReference type="Pfam" id="PF00004">
    <property type="entry name" value="AAA"/>
    <property type="match status" value="1"/>
</dbReference>
<dbReference type="Pfam" id="PF17862">
    <property type="entry name" value="AAA_lid_3"/>
    <property type="match status" value="1"/>
</dbReference>
<dbReference type="Pfam" id="PF06480">
    <property type="entry name" value="FtsH_ext"/>
    <property type="match status" value="1"/>
</dbReference>
<dbReference type="Pfam" id="PF01434">
    <property type="entry name" value="Peptidase_M41"/>
    <property type="match status" value="1"/>
</dbReference>
<dbReference type="SMART" id="SM00382">
    <property type="entry name" value="AAA"/>
    <property type="match status" value="1"/>
</dbReference>
<dbReference type="SUPFAM" id="SSF140990">
    <property type="entry name" value="FtsH protease domain-like"/>
    <property type="match status" value="1"/>
</dbReference>
<dbReference type="SUPFAM" id="SSF52540">
    <property type="entry name" value="P-loop containing nucleoside triphosphate hydrolases"/>
    <property type="match status" value="1"/>
</dbReference>
<dbReference type="PROSITE" id="PS00674">
    <property type="entry name" value="AAA"/>
    <property type="match status" value="1"/>
</dbReference>
<geneLocation type="chloroplast"/>
<proteinExistence type="inferred from homology"/>
<feature type="chain" id="PRO_0000084658" description="ATP-dependent zinc metalloprotease FtsH">
    <location>
        <begin position="1"/>
        <end position="603"/>
    </location>
</feature>
<feature type="topological domain" description="Stromal" evidence="1">
    <location>
        <begin position="1"/>
        <end position="2"/>
    </location>
</feature>
<feature type="transmembrane region" description="Helical" evidence="1">
    <location>
        <begin position="3"/>
        <end position="23"/>
    </location>
</feature>
<feature type="topological domain" description="Lumenal" evidence="1">
    <location>
        <begin position="24"/>
        <end position="101"/>
    </location>
</feature>
<feature type="transmembrane region" description="Helical" evidence="1">
    <location>
        <begin position="102"/>
        <end position="122"/>
    </location>
</feature>
<feature type="topological domain" description="Stromal" evidence="1">
    <location>
        <begin position="123"/>
        <end position="603"/>
    </location>
</feature>
<feature type="active site" evidence="1">
    <location>
        <position position="416"/>
    </location>
</feature>
<feature type="binding site" evidence="1">
    <location>
        <begin position="194"/>
        <end position="201"/>
    </location>
    <ligand>
        <name>ATP</name>
        <dbReference type="ChEBI" id="CHEBI:30616"/>
    </ligand>
</feature>
<feature type="binding site" evidence="1">
    <location>
        <position position="415"/>
    </location>
    <ligand>
        <name>Zn(2+)</name>
        <dbReference type="ChEBI" id="CHEBI:29105"/>
        <note>catalytic</note>
    </ligand>
</feature>
<feature type="binding site" evidence="1">
    <location>
        <position position="419"/>
    </location>
    <ligand>
        <name>Zn(2+)</name>
        <dbReference type="ChEBI" id="CHEBI:29105"/>
        <note>catalytic</note>
    </ligand>
</feature>
<feature type="binding site" evidence="1">
    <location>
        <position position="493"/>
    </location>
    <ligand>
        <name>Zn(2+)</name>
        <dbReference type="ChEBI" id="CHEBI:29105"/>
        <note>catalytic</note>
    </ligand>
</feature>
<accession>Q9TJ83</accession>
<keyword id="KW-0067">ATP-binding</keyword>
<keyword id="KW-0150">Chloroplast</keyword>
<keyword id="KW-0378">Hydrolase</keyword>
<keyword id="KW-0472">Membrane</keyword>
<keyword id="KW-0479">Metal-binding</keyword>
<keyword id="KW-0482">Metalloprotease</keyword>
<keyword id="KW-0547">Nucleotide-binding</keyword>
<keyword id="KW-0934">Plastid</keyword>
<keyword id="KW-0645">Protease</keyword>
<keyword id="KW-1185">Reference proteome</keyword>
<keyword id="KW-0793">Thylakoid</keyword>
<keyword id="KW-0812">Transmembrane</keyword>
<keyword id="KW-1133">Transmembrane helix</keyword>
<keyword id="KW-0862">Zinc</keyword>
<reference key="1">
    <citation type="journal article" date="1999" name="Plant Mol. Biol.">
        <title>Two ftsH-family genes encoded in the nuclear and chloroplast genomes of the primitive red alga Cyanidioschyzon merolae.</title>
        <authorList>
            <person name="Itoh R."/>
            <person name="Takano H."/>
            <person name="Ohta N."/>
            <person name="Miyagishima S.-Y."/>
            <person name="Kuroiwa H."/>
            <person name="Kuroiwa T."/>
        </authorList>
    </citation>
    <scope>NUCLEOTIDE SEQUENCE [GENOMIC DNA]</scope>
</reference>
<reference key="2">
    <citation type="journal article" date="2003" name="DNA Res.">
        <title>Complete sequence and analysis of the plastid genome of the unicellular red alga Cyanidioschyzon merolae.</title>
        <authorList>
            <person name="Ohta N."/>
            <person name="Matsuzaki M."/>
            <person name="Misumi O."/>
            <person name="Miyagishima S.-Y."/>
            <person name="Nozaki H."/>
            <person name="Tanaka K."/>
            <person name="Shin-i T."/>
            <person name="Kohara Y."/>
            <person name="Kuroiwa T."/>
        </authorList>
    </citation>
    <scope>NUCLEOTIDE SEQUENCE [LARGE SCALE GENOMIC DNA]</scope>
    <source>
        <strain>NIES-3377 / 10D</strain>
    </source>
</reference>
<comment type="function">
    <text evidence="1">Acts as a processive, ATP-dependent zinc metallopeptidase.</text>
</comment>
<comment type="cofactor">
    <cofactor evidence="1">
        <name>Zn(2+)</name>
        <dbReference type="ChEBI" id="CHEBI:29105"/>
    </cofactor>
    <text evidence="1">Binds 1 zinc ion per subunit.</text>
</comment>
<comment type="subunit">
    <text evidence="1">Homohexamer.</text>
</comment>
<comment type="subcellular location">
    <subcellularLocation>
        <location evidence="1">Plastid</location>
        <location evidence="1">Chloroplast thylakoid membrane</location>
        <topology evidence="1">Multi-pass membrane protein</topology>
        <orientation evidence="1">Stromal side</orientation>
    </subcellularLocation>
</comment>
<comment type="similarity">
    <text evidence="1">In the central section; belongs to the AAA ATPase family.</text>
</comment>
<comment type="similarity">
    <text evidence="1">In the C-terminal section; belongs to the peptidase M41 family.</text>
</comment>
<gene>
    <name evidence="1" type="primary">ftsH</name>
</gene>
<organism>
    <name type="scientific">Cyanidioschyzon merolae (strain NIES-3377 / 10D)</name>
    <name type="common">Unicellular red alga</name>
    <dbReference type="NCBI Taxonomy" id="280699"/>
    <lineage>
        <taxon>Eukaryota</taxon>
        <taxon>Rhodophyta</taxon>
        <taxon>Bangiophyceae</taxon>
        <taxon>Cyanidiales</taxon>
        <taxon>Cyanidiaceae</taxon>
        <taxon>Cyanidioschyzon</taxon>
    </lineage>
</organism>
<name>FTSH_CYAM1</name>
<protein>
    <recommendedName>
        <fullName evidence="1">ATP-dependent zinc metalloprotease FtsH</fullName>
        <ecNumber evidence="1">3.4.24.-</ecNumber>
    </recommendedName>
    <alternativeName>
        <fullName>FtsHCP</fullName>
    </alternativeName>
</protein>
<sequence length="603" mass="66300">MKNLWIWSLPLIVLAFIGWQELANQMPVATSRMTYGRLLEYMQMGWVKRIDVYDRTALIEASSPETGWQWIRVDLPANSSDWLEQAKTLHIDVDVHAVSNWINVASNWIIPLIIIGVVIWLLSRSASSNTTGALNFGKSKARFQMVAKTGIMFDDVAGIEEAKEELAEVVAFLKNPSKFLAVGASIPKGVLLVGPPGTGKTLLAKAIAGEASVPFFSISGSEFVEMFVGVGASRVRDLFKKAKQNAPCLVFIDEIDAVGRQRGAGIGGGNDEREQTLNQLLTEMDGFEGNTGVIVIAATNRVDVLDAALLRPGRFDRQIMVSMPDVKSRIAILKVHANQKKLHPQVSLEAVARRTAGFAGADLANLLNEAAILAVRRGLKQITWKEIDDAIDRVIAGMEGTPIMDGKIKRLIAYHETGHALTATLLPNHPPVQKVTLIPRRQAKGLTWFMQDNERDLLSKSQLMSMIMVALGGRAAEEAVFGNAEVTTGASNDLQQVTNLARQMVTRFGMSSLGPLCLETGNEEIFLGRDMRLMPEVSEEVIAQIDAQVRGMIEACYEKVLELMQANRVVMDRIVEELMEKETLDGKEFRQLVSQAARLTAVN</sequence>
<evidence type="ECO:0000255" key="1">
    <source>
        <dbReference type="HAMAP-Rule" id="MF_01458"/>
    </source>
</evidence>